<feature type="chain" id="PRO_0000389288" description="Small ribosomal subunit protein uS2A">
    <location>
        <begin position="1"/>
        <end position="290"/>
    </location>
</feature>
<feature type="region of interest" description="Disordered" evidence="2">
    <location>
        <begin position="257"/>
        <end position="290"/>
    </location>
</feature>
<feature type="compositionally biased region" description="Polar residues" evidence="2">
    <location>
        <begin position="272"/>
        <end position="290"/>
    </location>
</feature>
<proteinExistence type="inferred from homology"/>
<dbReference type="EMBL" id="KE651166">
    <property type="protein sequence ID" value="EEB07701.2"/>
    <property type="status" value="ALT_INIT"/>
    <property type="molecule type" value="Genomic_DNA"/>
</dbReference>
<dbReference type="RefSeq" id="XP_002173994.2">
    <property type="nucleotide sequence ID" value="XM_002173958.2"/>
</dbReference>
<dbReference type="SMR" id="B6K180"/>
<dbReference type="STRING" id="402676.B6K180"/>
<dbReference type="GeneID" id="7049465"/>
<dbReference type="JaponicusDB" id="SJAG_02803">
    <property type="gene designation" value="rps001"/>
</dbReference>
<dbReference type="eggNOG" id="KOG0830">
    <property type="taxonomic scope" value="Eukaryota"/>
</dbReference>
<dbReference type="OrthoDB" id="414863at2759"/>
<dbReference type="Proteomes" id="UP000001744">
    <property type="component" value="Unassembled WGS sequence"/>
</dbReference>
<dbReference type="GO" id="GO:0022627">
    <property type="term" value="C:cytosolic small ribosomal subunit"/>
    <property type="evidence" value="ECO:0000318"/>
    <property type="project" value="GO_Central"/>
</dbReference>
<dbReference type="GO" id="GO:0003735">
    <property type="term" value="F:structural constituent of ribosome"/>
    <property type="evidence" value="ECO:0000318"/>
    <property type="project" value="GO_Central"/>
</dbReference>
<dbReference type="GO" id="GO:0002181">
    <property type="term" value="P:cytoplasmic translation"/>
    <property type="evidence" value="ECO:0000318"/>
    <property type="project" value="GO_Central"/>
</dbReference>
<dbReference type="GO" id="GO:0000028">
    <property type="term" value="P:ribosomal small subunit assembly"/>
    <property type="evidence" value="ECO:0000318"/>
    <property type="project" value="GO_Central"/>
</dbReference>
<dbReference type="CDD" id="cd01425">
    <property type="entry name" value="RPS2"/>
    <property type="match status" value="1"/>
</dbReference>
<dbReference type="FunFam" id="3.40.50.10490:FF:000010">
    <property type="entry name" value="40S ribosomal protein S0"/>
    <property type="match status" value="1"/>
</dbReference>
<dbReference type="Gene3D" id="3.40.50.10490">
    <property type="entry name" value="Glucose-6-phosphate isomerase like protein, domain 1"/>
    <property type="match status" value="1"/>
</dbReference>
<dbReference type="HAMAP" id="MF_03015">
    <property type="entry name" value="Ribosomal_S2_euk"/>
    <property type="match status" value="1"/>
</dbReference>
<dbReference type="InterPro" id="IPR001865">
    <property type="entry name" value="Ribosomal_uS2"/>
</dbReference>
<dbReference type="InterPro" id="IPR032281">
    <property type="entry name" value="Ribosomal_uS2_C"/>
</dbReference>
<dbReference type="InterPro" id="IPR027498">
    <property type="entry name" value="Ribosomal_uS2_euk"/>
</dbReference>
<dbReference type="InterPro" id="IPR005707">
    <property type="entry name" value="Ribosomal_uS2_euk/arc"/>
</dbReference>
<dbReference type="InterPro" id="IPR023591">
    <property type="entry name" value="Ribosomal_uS2_flav_dom_sf"/>
</dbReference>
<dbReference type="NCBIfam" id="TIGR01012">
    <property type="entry name" value="uS2_euk_arch"/>
    <property type="match status" value="1"/>
</dbReference>
<dbReference type="PANTHER" id="PTHR11489">
    <property type="entry name" value="40S RIBOSOMAL PROTEIN SA"/>
    <property type="match status" value="1"/>
</dbReference>
<dbReference type="Pfam" id="PF16122">
    <property type="entry name" value="40S_SA_C"/>
    <property type="match status" value="1"/>
</dbReference>
<dbReference type="Pfam" id="PF00318">
    <property type="entry name" value="Ribosomal_S2"/>
    <property type="match status" value="1"/>
</dbReference>
<dbReference type="PRINTS" id="PR00395">
    <property type="entry name" value="RIBOSOMALS2"/>
</dbReference>
<dbReference type="SUPFAM" id="SSF52313">
    <property type="entry name" value="Ribosomal protein S2"/>
    <property type="match status" value="1"/>
</dbReference>
<gene>
    <name type="primary">rps0a</name>
    <name type="ORF">SJAG_02803</name>
</gene>
<protein>
    <recommendedName>
        <fullName evidence="1">Small ribosomal subunit protein uS2A</fullName>
    </recommendedName>
    <alternativeName>
        <fullName evidence="3">40S ribosomal protein S0-A</fullName>
    </alternativeName>
</protein>
<reference key="1">
    <citation type="journal article" date="2011" name="Science">
        <title>Comparative functional genomics of the fission yeasts.</title>
        <authorList>
            <person name="Rhind N."/>
            <person name="Chen Z."/>
            <person name="Yassour M."/>
            <person name="Thompson D.A."/>
            <person name="Haas B.J."/>
            <person name="Habib N."/>
            <person name="Wapinski I."/>
            <person name="Roy S."/>
            <person name="Lin M.F."/>
            <person name="Heiman D.I."/>
            <person name="Young S.K."/>
            <person name="Furuya K."/>
            <person name="Guo Y."/>
            <person name="Pidoux A."/>
            <person name="Chen H.M."/>
            <person name="Robbertse B."/>
            <person name="Goldberg J.M."/>
            <person name="Aoki K."/>
            <person name="Bayne E.H."/>
            <person name="Berlin A.M."/>
            <person name="Desjardins C.A."/>
            <person name="Dobbs E."/>
            <person name="Dukaj L."/>
            <person name="Fan L."/>
            <person name="FitzGerald M.G."/>
            <person name="French C."/>
            <person name="Gujja S."/>
            <person name="Hansen K."/>
            <person name="Keifenheim D."/>
            <person name="Levin J.Z."/>
            <person name="Mosher R.A."/>
            <person name="Mueller C.A."/>
            <person name="Pfiffner J."/>
            <person name="Priest M."/>
            <person name="Russ C."/>
            <person name="Smialowska A."/>
            <person name="Swoboda P."/>
            <person name="Sykes S.M."/>
            <person name="Vaughn M."/>
            <person name="Vengrova S."/>
            <person name="Yoder R."/>
            <person name="Zeng Q."/>
            <person name="Allshire R."/>
            <person name="Baulcombe D."/>
            <person name="Birren B.W."/>
            <person name="Brown W."/>
            <person name="Ekwall K."/>
            <person name="Kellis M."/>
            <person name="Leatherwood J."/>
            <person name="Levin H."/>
            <person name="Margalit H."/>
            <person name="Martienssen R."/>
            <person name="Nieduszynski C.A."/>
            <person name="Spatafora J.W."/>
            <person name="Friedman N."/>
            <person name="Dalgaard J.Z."/>
            <person name="Baumann P."/>
            <person name="Niki H."/>
            <person name="Regev A."/>
            <person name="Nusbaum C."/>
        </authorList>
    </citation>
    <scope>NUCLEOTIDE SEQUENCE [LARGE SCALE GENOMIC DNA]</scope>
    <source>
        <strain>yFS275 / FY16936</strain>
    </source>
</reference>
<name>RSSA1_SCHJY</name>
<organism>
    <name type="scientific">Schizosaccharomyces japonicus (strain yFS275 / FY16936)</name>
    <name type="common">Fission yeast</name>
    <dbReference type="NCBI Taxonomy" id="402676"/>
    <lineage>
        <taxon>Eukaryota</taxon>
        <taxon>Fungi</taxon>
        <taxon>Dikarya</taxon>
        <taxon>Ascomycota</taxon>
        <taxon>Taphrinomycotina</taxon>
        <taxon>Schizosaccharomycetes</taxon>
        <taxon>Schizosaccharomycetales</taxon>
        <taxon>Schizosaccharomycetaceae</taxon>
        <taxon>Schizosaccharomyces</taxon>
    </lineage>
</organism>
<sequence length="290" mass="31406">MAQAGRPSILNATDDDIKQLLAASCHIGSKNLDVRMENYVWKRRSDGVHIINIGKTWEKIVLAARVIATIENPADVCVVSSRPYGHRAVLKFAAHTGATAIAGRFTPGNFTNYITRTYREPRLIIATDPRADAQAIKEASYVNIPVISLCDTDSPLAHVDVAIPTNNKGYKSIGLVWWLLAREVLRLRGTISRTSPWDVMVDMYFYRDPEEIEREEEAKAAAEAEAEAAATAEAAAEFEVTDSAAGTVDPSVLAAATAGQVGESSWEEAGDWNTTGAAQTSDWAATAEAQ</sequence>
<keyword id="KW-0963">Cytoplasm</keyword>
<keyword id="KW-1185">Reference proteome</keyword>
<keyword id="KW-0687">Ribonucleoprotein</keyword>
<keyword id="KW-0689">Ribosomal protein</keyword>
<comment type="function">
    <text evidence="1">Required for the assembly and/or stability of the 40S ribosomal subunit. Required for the processing of the 20S rRNA-precursor to mature 18S rRNA in a late step of the maturation of 40S ribosomal subunits.</text>
</comment>
<comment type="subunit">
    <text evidence="1">Component of the small ribosomal subunit. Mature ribosomes consist of a small (40S) and a large (60S) subunit. The 40S subunit contains about 33 different proteins and 1 molecule of RNA (18S). The 60S subunit contains about 49 different proteins and 3 molecules of RNA (25S, 5.8S and 5S). Interacts with rps21.</text>
</comment>
<comment type="subcellular location">
    <subcellularLocation>
        <location evidence="1">Cytoplasm</location>
    </subcellularLocation>
</comment>
<comment type="similarity">
    <text evidence="1">Belongs to the universal ribosomal protein uS2 family.</text>
</comment>
<comment type="sequence caution" evidence="3">
    <conflict type="erroneous initiation">
        <sequence resource="EMBL-CDS" id="EEB07701"/>
    </conflict>
    <text>Extended N-terminus.</text>
</comment>
<accession>B6K180</accession>
<evidence type="ECO:0000255" key="1">
    <source>
        <dbReference type="HAMAP-Rule" id="MF_03015"/>
    </source>
</evidence>
<evidence type="ECO:0000256" key="2">
    <source>
        <dbReference type="SAM" id="MobiDB-lite"/>
    </source>
</evidence>
<evidence type="ECO:0000305" key="3"/>